<comment type="function">
    <text evidence="1">Catalyzes the interconversion of 2-phosphoglycerate and 3-phosphoglycerate.</text>
</comment>
<comment type="catalytic activity">
    <reaction evidence="1">
        <text>(2R)-2-phosphoglycerate = (2R)-3-phosphoglycerate</text>
        <dbReference type="Rhea" id="RHEA:15901"/>
        <dbReference type="ChEBI" id="CHEBI:58272"/>
        <dbReference type="ChEBI" id="CHEBI:58289"/>
        <dbReference type="EC" id="5.4.2.12"/>
    </reaction>
</comment>
<comment type="cofactor">
    <cofactor evidence="1">
        <name>Mn(2+)</name>
        <dbReference type="ChEBI" id="CHEBI:29035"/>
    </cofactor>
    <text evidence="1">Binds 2 manganese ions per subunit.</text>
</comment>
<comment type="pathway">
    <text evidence="1">Carbohydrate degradation; glycolysis; pyruvate from D-glyceraldehyde 3-phosphate: step 3/5.</text>
</comment>
<comment type="subunit">
    <text evidence="1">Monomer.</text>
</comment>
<comment type="similarity">
    <text evidence="1">Belongs to the BPG-independent phosphoglycerate mutase family.</text>
</comment>
<reference key="1">
    <citation type="submission" date="2006-03" db="EMBL/GenBank/DDBJ databases">
        <title>Complete genome sequence of Francisella tularensis LVS (Live Vaccine Strain).</title>
        <authorList>
            <person name="Chain P."/>
            <person name="Larimer F."/>
            <person name="Land M."/>
            <person name="Stilwagen S."/>
            <person name="Larsson P."/>
            <person name="Bearden S."/>
            <person name="Chu M."/>
            <person name="Oyston P."/>
            <person name="Forsman M."/>
            <person name="Andersson S."/>
            <person name="Lindler L."/>
            <person name="Titball R."/>
            <person name="Garcia E."/>
        </authorList>
    </citation>
    <scope>NUCLEOTIDE SEQUENCE [LARGE SCALE GENOMIC DNA]</scope>
    <source>
        <strain>LVS</strain>
    </source>
</reference>
<organism>
    <name type="scientific">Francisella tularensis subsp. holarctica (strain LVS)</name>
    <dbReference type="NCBI Taxonomy" id="376619"/>
    <lineage>
        <taxon>Bacteria</taxon>
        <taxon>Pseudomonadati</taxon>
        <taxon>Pseudomonadota</taxon>
        <taxon>Gammaproteobacteria</taxon>
        <taxon>Thiotrichales</taxon>
        <taxon>Francisellaceae</taxon>
        <taxon>Francisella</taxon>
    </lineage>
</organism>
<feature type="chain" id="PRO_1000063970" description="2,3-bisphosphoglycerate-independent phosphoglycerate mutase">
    <location>
        <begin position="1"/>
        <end position="512"/>
    </location>
</feature>
<feature type="active site" description="Phosphoserine intermediate" evidence="1">
    <location>
        <position position="61"/>
    </location>
</feature>
<feature type="binding site" evidence="1">
    <location>
        <position position="11"/>
    </location>
    <ligand>
        <name>Mn(2+)</name>
        <dbReference type="ChEBI" id="CHEBI:29035"/>
        <label>2</label>
    </ligand>
</feature>
<feature type="binding site" evidence="1">
    <location>
        <position position="61"/>
    </location>
    <ligand>
        <name>Mn(2+)</name>
        <dbReference type="ChEBI" id="CHEBI:29035"/>
        <label>2</label>
    </ligand>
</feature>
<feature type="binding site" evidence="1">
    <location>
        <position position="122"/>
    </location>
    <ligand>
        <name>substrate</name>
    </ligand>
</feature>
<feature type="binding site" evidence="1">
    <location>
        <begin position="152"/>
        <end position="153"/>
    </location>
    <ligand>
        <name>substrate</name>
    </ligand>
</feature>
<feature type="binding site" evidence="1">
    <location>
        <position position="184"/>
    </location>
    <ligand>
        <name>substrate</name>
    </ligand>
</feature>
<feature type="binding site" evidence="1">
    <location>
        <position position="190"/>
    </location>
    <ligand>
        <name>substrate</name>
    </ligand>
</feature>
<feature type="binding site" evidence="1">
    <location>
        <begin position="259"/>
        <end position="262"/>
    </location>
    <ligand>
        <name>substrate</name>
    </ligand>
</feature>
<feature type="binding site" evidence="1">
    <location>
        <position position="332"/>
    </location>
    <ligand>
        <name>substrate</name>
    </ligand>
</feature>
<feature type="binding site" evidence="1">
    <location>
        <position position="399"/>
    </location>
    <ligand>
        <name>Mn(2+)</name>
        <dbReference type="ChEBI" id="CHEBI:29035"/>
        <label>1</label>
    </ligand>
</feature>
<feature type="binding site" evidence="1">
    <location>
        <position position="403"/>
    </location>
    <ligand>
        <name>Mn(2+)</name>
        <dbReference type="ChEBI" id="CHEBI:29035"/>
        <label>1</label>
    </ligand>
</feature>
<feature type="binding site" evidence="1">
    <location>
        <position position="440"/>
    </location>
    <ligand>
        <name>Mn(2+)</name>
        <dbReference type="ChEBI" id="CHEBI:29035"/>
        <label>2</label>
    </ligand>
</feature>
<feature type="binding site" evidence="1">
    <location>
        <position position="441"/>
    </location>
    <ligand>
        <name>Mn(2+)</name>
        <dbReference type="ChEBI" id="CHEBI:29035"/>
        <label>2</label>
    </ligand>
</feature>
<feature type="binding site" evidence="1">
    <location>
        <position position="459"/>
    </location>
    <ligand>
        <name>Mn(2+)</name>
        <dbReference type="ChEBI" id="CHEBI:29035"/>
        <label>1</label>
    </ligand>
</feature>
<proteinExistence type="inferred from homology"/>
<evidence type="ECO:0000255" key="1">
    <source>
        <dbReference type="HAMAP-Rule" id="MF_01038"/>
    </source>
</evidence>
<accession>Q2A2B1</accession>
<keyword id="KW-0324">Glycolysis</keyword>
<keyword id="KW-0413">Isomerase</keyword>
<keyword id="KW-0464">Manganese</keyword>
<keyword id="KW-0479">Metal-binding</keyword>
<keyword id="KW-1185">Reference proteome</keyword>
<gene>
    <name evidence="1" type="primary">gpmI</name>
    <name type="ordered locus">FTL_1490</name>
</gene>
<sequence>MKKTTLLVILDGWGYSDSDYFNAIKNANTPTWDSIWQEFPKTLINASSLEVGLPRSQMGNSEVGHVNIGCGRVVYQELTKIDKAIEEKTFGDNKAICAAIDNVIKNDSNLHLIGLLSPGGVHSHEEHIFEMIKIAKQKGIKRLYLHAFLDGRDTPPRSAEKSIKKADKLLQDLNLGYIASVCGRYYAMDRDNRWDRVEKAYNAIVNANADFIYDSALEALEQSYARDQSDEFVIPTCIKKDGHLVKVQDNDSVIFMNFRADRAREISHAFTDESFDHFPRKKHLNINFTTLTEYDSKLKCAVAFPPEQPINTLGEVLMKNHKTQLRIAETEKYPHVTFFFNGGREEQFEGEDRILIPSPKVATYDLQPEMSAPEVTDKLVAAINSGKYDCIVCNYANSDMVGHTGNYEAAMQAIEYLDKCIARLKDAILEHDGNMFITADHGNADMMVNPETQKPHTAHTTNLVPFIYVGHKKAQVALEHGKLSDIAPTLLNVMGIAQPKEMTGKTIFNFEK</sequence>
<dbReference type="EC" id="5.4.2.12" evidence="1"/>
<dbReference type="EMBL" id="AM233362">
    <property type="protein sequence ID" value="CAJ79929.1"/>
    <property type="molecule type" value="Genomic_DNA"/>
</dbReference>
<dbReference type="RefSeq" id="WP_003019368.1">
    <property type="nucleotide sequence ID" value="NZ_CP009694.1"/>
</dbReference>
<dbReference type="SMR" id="Q2A2B1"/>
<dbReference type="KEGG" id="ftl:FTL_1490"/>
<dbReference type="UniPathway" id="UPA00109">
    <property type="reaction ID" value="UER00186"/>
</dbReference>
<dbReference type="Proteomes" id="UP000001944">
    <property type="component" value="Chromosome"/>
</dbReference>
<dbReference type="GO" id="GO:0005829">
    <property type="term" value="C:cytosol"/>
    <property type="evidence" value="ECO:0007669"/>
    <property type="project" value="TreeGrafter"/>
</dbReference>
<dbReference type="GO" id="GO:0030145">
    <property type="term" value="F:manganese ion binding"/>
    <property type="evidence" value="ECO:0007669"/>
    <property type="project" value="UniProtKB-UniRule"/>
</dbReference>
<dbReference type="GO" id="GO:0004619">
    <property type="term" value="F:phosphoglycerate mutase activity"/>
    <property type="evidence" value="ECO:0007669"/>
    <property type="project" value="UniProtKB-EC"/>
</dbReference>
<dbReference type="GO" id="GO:0006007">
    <property type="term" value="P:glucose catabolic process"/>
    <property type="evidence" value="ECO:0007669"/>
    <property type="project" value="InterPro"/>
</dbReference>
<dbReference type="GO" id="GO:0006096">
    <property type="term" value="P:glycolytic process"/>
    <property type="evidence" value="ECO:0007669"/>
    <property type="project" value="UniProtKB-UniRule"/>
</dbReference>
<dbReference type="CDD" id="cd16010">
    <property type="entry name" value="iPGM"/>
    <property type="match status" value="1"/>
</dbReference>
<dbReference type="FunFam" id="3.40.1450.10:FF:000001">
    <property type="entry name" value="2,3-bisphosphoglycerate-independent phosphoglycerate mutase"/>
    <property type="match status" value="1"/>
</dbReference>
<dbReference type="FunFam" id="3.40.720.10:FF:000001">
    <property type="entry name" value="2,3-bisphosphoglycerate-independent phosphoglycerate mutase"/>
    <property type="match status" value="1"/>
</dbReference>
<dbReference type="Gene3D" id="3.40.720.10">
    <property type="entry name" value="Alkaline Phosphatase, subunit A"/>
    <property type="match status" value="1"/>
</dbReference>
<dbReference type="Gene3D" id="3.40.1450.10">
    <property type="entry name" value="BPG-independent phosphoglycerate mutase, domain B"/>
    <property type="match status" value="1"/>
</dbReference>
<dbReference type="HAMAP" id="MF_01038">
    <property type="entry name" value="GpmI"/>
    <property type="match status" value="1"/>
</dbReference>
<dbReference type="InterPro" id="IPR017850">
    <property type="entry name" value="Alkaline_phosphatase_core_sf"/>
</dbReference>
<dbReference type="InterPro" id="IPR011258">
    <property type="entry name" value="BPG-indep_PGM_N"/>
</dbReference>
<dbReference type="InterPro" id="IPR006124">
    <property type="entry name" value="Metalloenzyme"/>
</dbReference>
<dbReference type="InterPro" id="IPR036646">
    <property type="entry name" value="PGAM_B_sf"/>
</dbReference>
<dbReference type="InterPro" id="IPR005995">
    <property type="entry name" value="Pgm_bpd_ind"/>
</dbReference>
<dbReference type="NCBIfam" id="TIGR01307">
    <property type="entry name" value="pgm_bpd_ind"/>
    <property type="match status" value="1"/>
</dbReference>
<dbReference type="PANTHER" id="PTHR31637">
    <property type="entry name" value="2,3-BISPHOSPHOGLYCERATE-INDEPENDENT PHOSPHOGLYCERATE MUTASE"/>
    <property type="match status" value="1"/>
</dbReference>
<dbReference type="PANTHER" id="PTHR31637:SF0">
    <property type="entry name" value="2,3-BISPHOSPHOGLYCERATE-INDEPENDENT PHOSPHOGLYCERATE MUTASE"/>
    <property type="match status" value="1"/>
</dbReference>
<dbReference type="Pfam" id="PF06415">
    <property type="entry name" value="iPGM_N"/>
    <property type="match status" value="1"/>
</dbReference>
<dbReference type="Pfam" id="PF01676">
    <property type="entry name" value="Metalloenzyme"/>
    <property type="match status" value="1"/>
</dbReference>
<dbReference type="PIRSF" id="PIRSF001492">
    <property type="entry name" value="IPGAM"/>
    <property type="match status" value="1"/>
</dbReference>
<dbReference type="SUPFAM" id="SSF64158">
    <property type="entry name" value="2,3-Bisphosphoglycerate-independent phosphoglycerate mutase, substrate-binding domain"/>
    <property type="match status" value="1"/>
</dbReference>
<dbReference type="SUPFAM" id="SSF53649">
    <property type="entry name" value="Alkaline phosphatase-like"/>
    <property type="match status" value="1"/>
</dbReference>
<name>GPMI_FRATH</name>
<protein>
    <recommendedName>
        <fullName evidence="1">2,3-bisphosphoglycerate-independent phosphoglycerate mutase</fullName>
        <shortName evidence="1">BPG-independent PGAM</shortName>
        <shortName evidence="1">Phosphoglyceromutase</shortName>
        <shortName evidence="1">iPGM</shortName>
        <ecNumber evidence="1">5.4.2.12</ecNumber>
    </recommendedName>
</protein>